<protein>
    <recommendedName>
        <fullName evidence="1">Putative gluconeogenesis factor</fullName>
    </recommendedName>
</protein>
<organism>
    <name type="scientific">Thermoanaerobacterium thermosulfurigenes</name>
    <name type="common">Clostridium thermosulfurogenes</name>
    <dbReference type="NCBI Taxonomy" id="33950"/>
    <lineage>
        <taxon>Bacteria</taxon>
        <taxon>Bacillati</taxon>
        <taxon>Bacillota</taxon>
        <taxon>Clostridia</taxon>
        <taxon>Thermoanaerobacterales</taxon>
        <taxon>Thermoanaerobacteraceae</taxon>
        <taxon>Thermoanaerobacterium</taxon>
    </lineage>
</organism>
<keyword id="KW-0963">Cytoplasm</keyword>
<accession>P38541</accession>
<comment type="function">
    <text evidence="1">Required for morphogenesis under gluconeogenic growth conditions.</text>
</comment>
<comment type="subcellular location">
    <subcellularLocation>
        <location evidence="1">Cytoplasm</location>
    </subcellularLocation>
</comment>
<comment type="similarity">
    <text evidence="1">Belongs to the gluconeogenesis factor family.</text>
</comment>
<evidence type="ECO:0000255" key="1">
    <source>
        <dbReference type="HAMAP-Rule" id="MF_00973"/>
    </source>
</evidence>
<name>GNGF_THETU</name>
<dbReference type="EMBL" id="M57692">
    <property type="protein sequence ID" value="AAB00840.1"/>
    <property type="molecule type" value="Genomic_DNA"/>
</dbReference>
<dbReference type="PIR" id="S27544">
    <property type="entry name" value="S27544"/>
</dbReference>
<dbReference type="SMR" id="P38541"/>
<dbReference type="GO" id="GO:0005737">
    <property type="term" value="C:cytoplasm"/>
    <property type="evidence" value="ECO:0007669"/>
    <property type="project" value="UniProtKB-SubCell"/>
</dbReference>
<dbReference type="GO" id="GO:0043743">
    <property type="term" value="F:LPPG:FO 2-phospho-L-lactate transferase activity"/>
    <property type="evidence" value="ECO:0007669"/>
    <property type="project" value="InterPro"/>
</dbReference>
<dbReference type="GO" id="GO:0008360">
    <property type="term" value="P:regulation of cell shape"/>
    <property type="evidence" value="ECO:0007669"/>
    <property type="project" value="UniProtKB-UniRule"/>
</dbReference>
<dbReference type="CDD" id="cd07187">
    <property type="entry name" value="YvcK_like"/>
    <property type="match status" value="1"/>
</dbReference>
<dbReference type="Gene3D" id="3.40.50.10680">
    <property type="entry name" value="CofD-like domains"/>
    <property type="match status" value="1"/>
</dbReference>
<dbReference type="HAMAP" id="MF_00973">
    <property type="entry name" value="Gluconeogen_factor"/>
    <property type="match status" value="1"/>
</dbReference>
<dbReference type="InterPro" id="IPR002882">
    <property type="entry name" value="CofD"/>
</dbReference>
<dbReference type="InterPro" id="IPR038136">
    <property type="entry name" value="CofD-like_dom_sf"/>
</dbReference>
<dbReference type="InterPro" id="IPR010119">
    <property type="entry name" value="Gluconeogen_factor"/>
</dbReference>
<dbReference type="NCBIfam" id="TIGR01826">
    <property type="entry name" value="CofD_related"/>
    <property type="match status" value="1"/>
</dbReference>
<dbReference type="PANTHER" id="PTHR30135:SF3">
    <property type="entry name" value="GLUCONEOGENESIS FACTOR-RELATED"/>
    <property type="match status" value="1"/>
</dbReference>
<dbReference type="PANTHER" id="PTHR30135">
    <property type="entry name" value="UNCHARACTERIZED PROTEIN YVCK-RELATED"/>
    <property type="match status" value="1"/>
</dbReference>
<dbReference type="Pfam" id="PF01933">
    <property type="entry name" value="CofD"/>
    <property type="match status" value="1"/>
</dbReference>
<dbReference type="SUPFAM" id="SSF142338">
    <property type="entry name" value="CofD-like"/>
    <property type="match status" value="1"/>
</dbReference>
<proteinExistence type="inferred from homology"/>
<reference key="1">
    <citation type="journal article" date="1994" name="J. Bacteriol.">
        <title>Pullulanase of Thermoanaerobacterium thermosulfurigenes EM1 (Clostridium thermosulfurogenes): molecular analysis of the gene, composite structure of the enzyme, and a common model for its attachment to the cell surface.</title>
        <authorList>
            <person name="Matuschek M."/>
            <person name="Burchhardt G."/>
            <person name="Sahm K."/>
            <person name="Bahl H."/>
        </authorList>
    </citation>
    <scope>NUCLEOTIDE SEQUENCE [GENOMIC DNA]</scope>
    <source>
        <strain>DSM 3896 / EM1</strain>
    </source>
</reference>
<sequence>MKNFAYLNGPKVVVIGGGTGLSTMLRGLKKYTHNITAIVTVADDGGGSGVLREDLGMLPPGDIRNCILALRNTEPTMEKLLQYRFTDGMLKGQSFGNLFLAAMNGISISFEEAVKKMSEVLAVSGKVLPVTLDDVKLKAKLKNGIVIDGESLIPKLQMKEKSPIERIFLEPKDAKPVKEALIDIMDADEIILGPGSLYTSIIPNLLVNDVCEAIEDSKAIKVYVCNIMTQPGETIGYDANAHVDALFLHGLKSLDYVIVNNGEIPYEYKDRYKEDMSQPVSYDVESFKQKGIKVIEKDVLAIRNNYIRHDEQKLAEILMGLLE</sequence>
<feature type="chain" id="PRO_0000107820" description="Putative gluconeogenesis factor">
    <location>
        <begin position="1"/>
        <end position="323"/>
    </location>
</feature>